<organism>
    <name type="scientific">Oenothera parviflora</name>
    <name type="common">Small-flowered evening primrose</name>
    <name type="synonym">Oenothera cruciata</name>
    <dbReference type="NCBI Taxonomy" id="482429"/>
    <lineage>
        <taxon>Eukaryota</taxon>
        <taxon>Viridiplantae</taxon>
        <taxon>Streptophyta</taxon>
        <taxon>Embryophyta</taxon>
        <taxon>Tracheophyta</taxon>
        <taxon>Spermatophyta</taxon>
        <taxon>Magnoliopsida</taxon>
        <taxon>eudicotyledons</taxon>
        <taxon>Gunneridae</taxon>
        <taxon>Pentapetalae</taxon>
        <taxon>rosids</taxon>
        <taxon>malvids</taxon>
        <taxon>Myrtales</taxon>
        <taxon>Onagraceae</taxon>
        <taxon>Onagroideae</taxon>
        <taxon>Onagreae</taxon>
        <taxon>Oenothera</taxon>
    </lineage>
</organism>
<geneLocation type="chloroplast"/>
<accession>B0Z5H4</accession>
<dbReference type="EC" id="7.1.1.-"/>
<dbReference type="EMBL" id="EU262891">
    <property type="protein sequence ID" value="ABX10167.1"/>
    <property type="molecule type" value="Genomic_DNA"/>
</dbReference>
<dbReference type="RefSeq" id="YP_001687497.1">
    <property type="nucleotide sequence ID" value="NC_010362.1"/>
</dbReference>
<dbReference type="SMR" id="B0Z5H4"/>
<dbReference type="GeneID" id="5955434"/>
<dbReference type="GO" id="GO:0009535">
    <property type="term" value="C:chloroplast thylakoid membrane"/>
    <property type="evidence" value="ECO:0007669"/>
    <property type="project" value="UniProtKB-SubCell"/>
</dbReference>
<dbReference type="GO" id="GO:0008137">
    <property type="term" value="F:NADH dehydrogenase (ubiquinone) activity"/>
    <property type="evidence" value="ECO:0007669"/>
    <property type="project" value="InterPro"/>
</dbReference>
<dbReference type="GO" id="GO:0048038">
    <property type="term" value="F:quinone binding"/>
    <property type="evidence" value="ECO:0007669"/>
    <property type="project" value="UniProtKB-KW"/>
</dbReference>
<dbReference type="GO" id="GO:0042773">
    <property type="term" value="P:ATP synthesis coupled electron transport"/>
    <property type="evidence" value="ECO:0007669"/>
    <property type="project" value="InterPro"/>
</dbReference>
<dbReference type="GO" id="GO:0015990">
    <property type="term" value="P:electron transport coupled proton transport"/>
    <property type="evidence" value="ECO:0007669"/>
    <property type="project" value="TreeGrafter"/>
</dbReference>
<dbReference type="Gene3D" id="1.20.5.2700">
    <property type="match status" value="1"/>
</dbReference>
<dbReference type="InterPro" id="IPR002128">
    <property type="entry name" value="NADH_UbQ_OxRdtase_chlpt_su5_C"/>
</dbReference>
<dbReference type="InterPro" id="IPR018393">
    <property type="entry name" value="NADHpl_OxRdtase_5_subgr"/>
</dbReference>
<dbReference type="InterPro" id="IPR001750">
    <property type="entry name" value="ND/Mrp_TM"/>
</dbReference>
<dbReference type="InterPro" id="IPR003945">
    <property type="entry name" value="NU5C-like"/>
</dbReference>
<dbReference type="InterPro" id="IPR001516">
    <property type="entry name" value="Proton_antipo_N"/>
</dbReference>
<dbReference type="NCBIfam" id="TIGR01974">
    <property type="entry name" value="NDH_I_L"/>
    <property type="match status" value="1"/>
</dbReference>
<dbReference type="NCBIfam" id="NF005141">
    <property type="entry name" value="PRK06590.1"/>
    <property type="match status" value="1"/>
</dbReference>
<dbReference type="PANTHER" id="PTHR42829">
    <property type="entry name" value="NADH-UBIQUINONE OXIDOREDUCTASE CHAIN 5"/>
    <property type="match status" value="1"/>
</dbReference>
<dbReference type="PANTHER" id="PTHR42829:SF2">
    <property type="entry name" value="NADH-UBIQUINONE OXIDOREDUCTASE CHAIN 5"/>
    <property type="match status" value="1"/>
</dbReference>
<dbReference type="Pfam" id="PF01010">
    <property type="entry name" value="Proton_antipo_C"/>
    <property type="match status" value="1"/>
</dbReference>
<dbReference type="Pfam" id="PF00361">
    <property type="entry name" value="Proton_antipo_M"/>
    <property type="match status" value="1"/>
</dbReference>
<dbReference type="Pfam" id="PF00662">
    <property type="entry name" value="Proton_antipo_N"/>
    <property type="match status" value="1"/>
</dbReference>
<dbReference type="PRINTS" id="PR01434">
    <property type="entry name" value="NADHDHGNASE5"/>
</dbReference>
<dbReference type="PRINTS" id="PR01435">
    <property type="entry name" value="NPOXDRDTASE5"/>
</dbReference>
<reference key="1">
    <citation type="journal article" date="2008" name="Nucleic Acids Res.">
        <title>The complete nucleotide sequences of the five genetically distinct plastid genomes of Oenothera, subsection Oenothera: I. Sequence evaluation and plastome evolution.</title>
        <authorList>
            <person name="Greiner S."/>
            <person name="Wang X."/>
            <person name="Rauwolf U."/>
            <person name="Silber M.V."/>
            <person name="Mayer K."/>
            <person name="Meurer J."/>
            <person name="Haberer G."/>
            <person name="Herrmann R.G."/>
        </authorList>
    </citation>
    <scope>NUCLEOTIDE SEQUENCE [LARGE SCALE GENOMIC DNA]</scope>
    <source>
        <strain>cv. Atrovirens</strain>
    </source>
</reference>
<gene>
    <name type="primary">ndhF</name>
</gene>
<protein>
    <recommendedName>
        <fullName>NAD(P)H-quinone oxidoreductase subunit 5, chloroplastic</fullName>
        <ecNumber>7.1.1.-</ecNumber>
    </recommendedName>
    <alternativeName>
        <fullName>NAD(P)H dehydrogenase subunit 5</fullName>
    </alternativeName>
    <alternativeName>
        <fullName>NADH-plastoquinone oxidoreductase subunit 5</fullName>
    </alternativeName>
</protein>
<feature type="chain" id="PRO_0000360960" description="NAD(P)H-quinone oxidoreductase subunit 5, chloroplastic">
    <location>
        <begin position="1"/>
        <end position="772"/>
    </location>
</feature>
<feature type="transmembrane region" description="Helical" evidence="2">
    <location>
        <begin position="9"/>
        <end position="29"/>
    </location>
</feature>
<feature type="transmembrane region" description="Helical" evidence="2">
    <location>
        <begin position="40"/>
        <end position="60"/>
    </location>
</feature>
<feature type="transmembrane region" description="Helical" evidence="2">
    <location>
        <begin position="89"/>
        <end position="109"/>
    </location>
</feature>
<feature type="transmembrane region" description="Helical" evidence="2">
    <location>
        <begin position="125"/>
        <end position="145"/>
    </location>
</feature>
<feature type="transmembrane region" description="Helical" evidence="2">
    <location>
        <begin position="147"/>
        <end position="167"/>
    </location>
</feature>
<feature type="transmembrane region" description="Helical" evidence="2">
    <location>
        <begin position="185"/>
        <end position="205"/>
    </location>
</feature>
<feature type="transmembrane region" description="Helical" evidence="2">
    <location>
        <begin position="220"/>
        <end position="240"/>
    </location>
</feature>
<feature type="transmembrane region" description="Helical" evidence="2">
    <location>
        <begin position="259"/>
        <end position="279"/>
    </location>
</feature>
<feature type="transmembrane region" description="Helical" evidence="2">
    <location>
        <begin position="290"/>
        <end position="312"/>
    </location>
</feature>
<feature type="transmembrane region" description="Helical" evidence="2">
    <location>
        <begin position="328"/>
        <end position="348"/>
    </location>
</feature>
<feature type="transmembrane region" description="Helical" evidence="2">
    <location>
        <begin position="355"/>
        <end position="375"/>
    </location>
</feature>
<feature type="transmembrane region" description="Helical" evidence="2">
    <location>
        <begin position="397"/>
        <end position="417"/>
    </location>
</feature>
<feature type="transmembrane region" description="Helical" evidence="2">
    <location>
        <begin position="426"/>
        <end position="446"/>
    </location>
</feature>
<feature type="transmembrane region" description="Helical" evidence="2">
    <location>
        <begin position="550"/>
        <end position="570"/>
    </location>
</feature>
<feature type="transmembrane region" description="Helical" evidence="2">
    <location>
        <begin position="604"/>
        <end position="624"/>
    </location>
</feature>
<feature type="transmembrane region" description="Helical" evidence="2">
    <location>
        <begin position="731"/>
        <end position="751"/>
    </location>
</feature>
<sequence length="772" mass="87716">MEYTYQYSWIIPFIPLPVPILIGMGLLLFPTATKNHRRVWSFPSILLLSMVMLLSVYLSIQQINRSFIYQYVWSWTINNDFSLEFGHLIDPLASIMLILITTVGILVLFYSDNYMSHDQGYLRFFAYLSFFNTSMLGLVTSSNLIQIYIFWELVGMCSYLLIGFWFTRPIAATACQKAFVTNRVGDFGLLLGILGLYWITGSFEFRDLFEIVNNLIDNNNQVHFLFVTLCSFLLFAGAVAKSAQFPLHVWLPDAMEGPTPISALIHAATMVAAGIFLVARLLPLFVITPYIMNLISLIGIITVLLGATLALAQKDIKRSLAYSTMSQLGYMMLALGMGSYRAALFHLITHAYSKALLFLGSGSIIHSMESIVGYSPDKSQNMVLMGGLKKHVPITKTAFLVGTLSLCGIPPLACFWSKDEILNDSWLYSPIFAIIACSTAGFTAFYMFRVYLLTFDGHLNVHFQNYSGQKSSSVYSISLWGKQVPKRIQNPFCLLNLLTMNNNESTSFFWNNKCKLDGNVKKRIRPFITVTHFPNRKTFSYPHESDNTMLFSLFVLVLFTLFVAAIGIPFNQEGSDCDILSKLLNPSINLLHQNSNNFTDWYEFVTNASFSVSIALLGIFIATFLYKPIYSSLQNFNLLNSFYKRSANRVMWDKIQNWIYDWSYNRGYIDSFYTISLTGGIRGLAELSHFFDRRVIDGILNGFGLTSFFLGESLKYFGGGRISSYLLLYSIFIFIFLLMDSFFTNLPFFVLCQFLDSSFSMSISGFLLYENF</sequence>
<name>NU5C_OENPA</name>
<keyword id="KW-0150">Chloroplast</keyword>
<keyword id="KW-0472">Membrane</keyword>
<keyword id="KW-0520">NAD</keyword>
<keyword id="KW-0521">NADP</keyword>
<keyword id="KW-0934">Plastid</keyword>
<keyword id="KW-0618">Plastoquinone</keyword>
<keyword id="KW-0874">Quinone</keyword>
<keyword id="KW-0793">Thylakoid</keyword>
<keyword id="KW-1278">Translocase</keyword>
<keyword id="KW-0812">Transmembrane</keyword>
<keyword id="KW-1133">Transmembrane helix</keyword>
<keyword id="KW-0813">Transport</keyword>
<evidence type="ECO:0000250" key="1"/>
<evidence type="ECO:0000255" key="2"/>
<evidence type="ECO:0000305" key="3"/>
<proteinExistence type="inferred from homology"/>
<comment type="function">
    <text evidence="1">NDH shuttles electrons from NAD(P)H:plastoquinone, via FMN and iron-sulfur (Fe-S) centers, to quinones in the photosynthetic chain and possibly in a chloroplast respiratory chain. The immediate electron acceptor for the enzyme in this species is believed to be plastoquinone. Couples the redox reaction to proton translocation, and thus conserves the redox energy in a proton gradient (By similarity).</text>
</comment>
<comment type="catalytic activity">
    <reaction>
        <text>a plastoquinone + NADH + (n+1) H(+)(in) = a plastoquinol + NAD(+) + n H(+)(out)</text>
        <dbReference type="Rhea" id="RHEA:42608"/>
        <dbReference type="Rhea" id="RHEA-COMP:9561"/>
        <dbReference type="Rhea" id="RHEA-COMP:9562"/>
        <dbReference type="ChEBI" id="CHEBI:15378"/>
        <dbReference type="ChEBI" id="CHEBI:17757"/>
        <dbReference type="ChEBI" id="CHEBI:57540"/>
        <dbReference type="ChEBI" id="CHEBI:57945"/>
        <dbReference type="ChEBI" id="CHEBI:62192"/>
    </reaction>
</comment>
<comment type="catalytic activity">
    <reaction>
        <text>a plastoquinone + NADPH + (n+1) H(+)(in) = a plastoquinol + NADP(+) + n H(+)(out)</text>
        <dbReference type="Rhea" id="RHEA:42612"/>
        <dbReference type="Rhea" id="RHEA-COMP:9561"/>
        <dbReference type="Rhea" id="RHEA-COMP:9562"/>
        <dbReference type="ChEBI" id="CHEBI:15378"/>
        <dbReference type="ChEBI" id="CHEBI:17757"/>
        <dbReference type="ChEBI" id="CHEBI:57783"/>
        <dbReference type="ChEBI" id="CHEBI:58349"/>
        <dbReference type="ChEBI" id="CHEBI:62192"/>
    </reaction>
</comment>
<comment type="subunit">
    <text evidence="1">NDH is composed of at least 16 different subunits, 5 of which are encoded in the nucleus.</text>
</comment>
<comment type="subcellular location">
    <subcellularLocation>
        <location evidence="1">Plastid</location>
        <location evidence="1">Chloroplast thylakoid membrane</location>
        <topology evidence="1">Multi-pass membrane protein</topology>
    </subcellularLocation>
</comment>
<comment type="similarity">
    <text evidence="3">Belongs to the complex I subunit 5 family.</text>
</comment>